<protein>
    <recommendedName>
        <fullName>Pancreatic progenitor cell differentiation and proliferation factor B</fullName>
    </recommendedName>
    <alternativeName>
        <fullName>Exocrine differentiation and proliferation factor B</fullName>
    </alternativeName>
</protein>
<comment type="function">
    <text evidence="1">Probable regulator of exocrine pancreas development.</text>
</comment>
<comment type="similarity">
    <text evidence="3">Belongs to the PPDPF family.</text>
</comment>
<gene>
    <name type="primary">ppdpfb</name>
    <name type="synonym">exdpfb</name>
</gene>
<keyword id="KW-0217">Developmental protein</keyword>
<keyword id="KW-0221">Differentiation</keyword>
<keyword id="KW-1185">Reference proteome</keyword>
<feature type="chain" id="PRO_0000359767" description="Pancreatic progenitor cell differentiation and proliferation factor B">
    <location>
        <begin position="1"/>
        <end position="115"/>
    </location>
</feature>
<feature type="region of interest" description="Disordered" evidence="2">
    <location>
        <begin position="21"/>
        <end position="48"/>
    </location>
</feature>
<feature type="compositionally biased region" description="Low complexity" evidence="2">
    <location>
        <begin position="22"/>
        <end position="37"/>
    </location>
</feature>
<sequence length="115" mass="12084">MAAIPASGSLVATHDYYRRRIGSTSSSSSCGSSEYSGEVIPHHPGLPKQDSGHWWSSFFFGKQNLPGMGTVAEEAQQKSGVVSVTNGQVTCVAREMVMRQASESSDGGKSEAGNS</sequence>
<evidence type="ECO:0000250" key="1"/>
<evidence type="ECO:0000256" key="2">
    <source>
        <dbReference type="SAM" id="MobiDB-lite"/>
    </source>
</evidence>
<evidence type="ECO:0000305" key="3"/>
<proteinExistence type="inferred from homology"/>
<organism>
    <name type="scientific">Danio rerio</name>
    <name type="common">Zebrafish</name>
    <name type="synonym">Brachydanio rerio</name>
    <dbReference type="NCBI Taxonomy" id="7955"/>
    <lineage>
        <taxon>Eukaryota</taxon>
        <taxon>Metazoa</taxon>
        <taxon>Chordata</taxon>
        <taxon>Craniata</taxon>
        <taxon>Vertebrata</taxon>
        <taxon>Euteleostomi</taxon>
        <taxon>Actinopterygii</taxon>
        <taxon>Neopterygii</taxon>
        <taxon>Teleostei</taxon>
        <taxon>Ostariophysi</taxon>
        <taxon>Cypriniformes</taxon>
        <taxon>Danionidae</taxon>
        <taxon>Danioninae</taxon>
        <taxon>Danio</taxon>
    </lineage>
</organism>
<name>PDPFB_DANRE</name>
<accession>Q6PBI2</accession>
<reference key="1">
    <citation type="submission" date="2003-10" db="EMBL/GenBank/DDBJ databases">
        <authorList>
            <consortium name="NIH - Zebrafish Gene Collection (ZGC) project"/>
        </authorList>
    </citation>
    <scope>NUCLEOTIDE SEQUENCE [LARGE SCALE MRNA]</scope>
    <source>
        <tissue>Retina</tissue>
    </source>
</reference>
<dbReference type="EMBL" id="BC059699">
    <property type="protein sequence ID" value="AAH59699.1"/>
    <property type="molecule type" value="mRNA"/>
</dbReference>
<dbReference type="RefSeq" id="NP_956302.1">
    <property type="nucleotide sequence ID" value="NM_200008.1"/>
</dbReference>
<dbReference type="FunCoup" id="Q6PBI2">
    <property type="interactions" value="1251"/>
</dbReference>
<dbReference type="STRING" id="7955.ENSDARP00000043075"/>
<dbReference type="PaxDb" id="7955-ENSDARP00000043075"/>
<dbReference type="Ensembl" id="ENSDART00000043076">
    <property type="protein sequence ID" value="ENSDARP00000043075"/>
    <property type="gene ID" value="ENSDARG00000031317"/>
</dbReference>
<dbReference type="GeneID" id="336303"/>
<dbReference type="KEGG" id="dre:336303"/>
<dbReference type="AGR" id="ZFIN:ZDB-GENE-030131-8247"/>
<dbReference type="CTD" id="336303"/>
<dbReference type="ZFIN" id="ZDB-GENE-030131-8247">
    <property type="gene designation" value="ppdpfb"/>
</dbReference>
<dbReference type="eggNOG" id="ENOG502S1KD">
    <property type="taxonomic scope" value="Eukaryota"/>
</dbReference>
<dbReference type="HOGENOM" id="CLU_157362_0_0_1"/>
<dbReference type="InParanoid" id="Q6PBI2"/>
<dbReference type="OMA" id="MVMQRQV"/>
<dbReference type="OrthoDB" id="9411431at2759"/>
<dbReference type="PhylomeDB" id="Q6PBI2"/>
<dbReference type="TreeFam" id="TF333000"/>
<dbReference type="PRO" id="PR:Q6PBI2"/>
<dbReference type="Proteomes" id="UP000000437">
    <property type="component" value="Chromosome 23"/>
</dbReference>
<dbReference type="Bgee" id="ENSDARG00000031317">
    <property type="expression patterns" value="Expressed in early embryo and 41 other cell types or tissues"/>
</dbReference>
<dbReference type="GO" id="GO:0030154">
    <property type="term" value="P:cell differentiation"/>
    <property type="evidence" value="ECO:0007669"/>
    <property type="project" value="UniProtKB-KW"/>
</dbReference>
<dbReference type="InterPro" id="IPR026754">
    <property type="entry name" value="PPDPF"/>
</dbReference>
<dbReference type="PANTHER" id="PTHR14572">
    <property type="entry name" value="PANCREATIC PROGENITOR CELL DIFFERENTIATION AND PROLIFERATION FACTOR"/>
    <property type="match status" value="1"/>
</dbReference>
<dbReference type="Pfam" id="PF15060">
    <property type="entry name" value="PPDFL"/>
    <property type="match status" value="1"/>
</dbReference>
<dbReference type="PRINTS" id="PR02071">
    <property type="entry name" value="PPDPFACTOR"/>
</dbReference>